<evidence type="ECO:0000250" key="1">
    <source>
        <dbReference type="UniProtKB" id="P24230"/>
    </source>
</evidence>
<evidence type="ECO:0000250" key="2">
    <source>
        <dbReference type="UniProtKB" id="Q9WY48"/>
    </source>
</evidence>
<evidence type="ECO:0000255" key="3">
    <source>
        <dbReference type="PROSITE-ProRule" id="PRU00541"/>
    </source>
</evidence>
<evidence type="ECO:0000255" key="4">
    <source>
        <dbReference type="PROSITE-ProRule" id="PRU00542"/>
    </source>
</evidence>
<evidence type="ECO:0000305" key="5"/>
<gene>
    <name type="primary">recG</name>
    <name type="ordered locus">SAV1227</name>
</gene>
<keyword id="KW-0067">ATP-binding</keyword>
<keyword id="KW-0227">DNA damage</keyword>
<keyword id="KW-0233">DNA recombination</keyword>
<keyword id="KW-0234">DNA repair</keyword>
<keyword id="KW-0238">DNA-binding</keyword>
<keyword id="KW-0347">Helicase</keyword>
<keyword id="KW-0378">Hydrolase</keyword>
<keyword id="KW-0413">Isomerase</keyword>
<keyword id="KW-0547">Nucleotide-binding</keyword>
<sequence length="686" mass="78344">MAKVNLIESPYSLLQLKGIGPKKIEVLQQLNIHTVEDLVLYLPTRYEDNTVIDLNQAEDQSNVTIEGQVYTAPVVAFFGRNKSKLTVHLMVNNIAVKCIFFNQPYLKKKIELNQTITVKGKWNRVKQEITGNRVFFNSQGTQTQENADVQLEPVYRIKEGIKQKQIRDQIRQALNDVTIHEWLTDELREKYKLETLDFTLNTLHHPKSKEDLLRARRTYAFTELFLFELRMQWLNRLEKSSDEAIEIDYDLDQVKSFIDRLPFELTEAQKSSVNEIFRDLKAPIRMHRLLQGDVGSGKTVVAAICMYALKTAGYQSALMVPTEILAEQHAESLMALFGDSMNVALLTGSVKGKKRKILLEQLENGTIDCLIGTHALIQDDVIFHNVGLVITDEQHRFGVNQRQLLREKGAMTNVLFMTATPIPRTLAISVFGEMDVSSIKQLPKGRKPIITTWAKHEQYDKVLMQMTSELKKGRQAYVICPLIESSEHLEDVQNVVALYESLQQYYGVSRVGLLHGKLSADEKDEVMQKFSNHEIDVLVSTTVVEVGVNVPNATFMMIYDADRFGLSTLHQLRGRVGRSDQQSYCVLIASPKTETGIERMTIMTQTTDGFELSERDLEMRGPGDFFGVKQSGLPDFLVANLVEDYRMLEVARDEAAELIQSGVFFENTYQHLRHFVEENLLHRSFD</sequence>
<organism>
    <name type="scientific">Staphylococcus aureus (strain Mu50 / ATCC 700699)</name>
    <dbReference type="NCBI Taxonomy" id="158878"/>
    <lineage>
        <taxon>Bacteria</taxon>
        <taxon>Bacillati</taxon>
        <taxon>Bacillota</taxon>
        <taxon>Bacilli</taxon>
        <taxon>Bacillales</taxon>
        <taxon>Staphylococcaceae</taxon>
        <taxon>Staphylococcus</taxon>
    </lineage>
</organism>
<protein>
    <recommendedName>
        <fullName>ATP-dependent DNA helicase RecG</fullName>
        <ecNumber evidence="1">5.6.2.4</ecNumber>
    </recommendedName>
    <alternativeName>
        <fullName>DNA branch migration protein RecG</fullName>
    </alternativeName>
    <alternativeName>
        <fullName>Probable DNA 3'-5' helicase RecG</fullName>
    </alternativeName>
</protein>
<name>RECG_STAAM</name>
<feature type="chain" id="PRO_0000102150" description="ATP-dependent DNA helicase RecG">
    <location>
        <begin position="1"/>
        <end position="686"/>
    </location>
</feature>
<feature type="domain" description="Helicase ATP-binding" evidence="3">
    <location>
        <begin position="279"/>
        <end position="439"/>
    </location>
</feature>
<feature type="domain" description="Helicase C-terminal" evidence="4">
    <location>
        <begin position="462"/>
        <end position="618"/>
    </location>
</feature>
<feature type="region of interest" description="Wedge domain" evidence="2">
    <location>
        <begin position="50"/>
        <end position="149"/>
    </location>
</feature>
<feature type="short sequence motif" description="DEAH box" evidence="3">
    <location>
        <begin position="392"/>
        <end position="395"/>
    </location>
</feature>
<feature type="binding site" evidence="3">
    <location>
        <begin position="292"/>
        <end position="299"/>
    </location>
    <ligand>
        <name>ATP</name>
        <dbReference type="ChEBI" id="CHEBI:30616"/>
    </ligand>
</feature>
<dbReference type="EC" id="5.6.2.4" evidence="1"/>
<dbReference type="EMBL" id="BA000017">
    <property type="protein sequence ID" value="BAB57389.1"/>
    <property type="molecule type" value="Genomic_DNA"/>
</dbReference>
<dbReference type="RefSeq" id="WP_001151509.1">
    <property type="nucleotide sequence ID" value="NC_002758.2"/>
</dbReference>
<dbReference type="SMR" id="P64324"/>
<dbReference type="KEGG" id="sav:SAV1227"/>
<dbReference type="HOGENOM" id="CLU_005122_7_1_9"/>
<dbReference type="PhylomeDB" id="P64324"/>
<dbReference type="Proteomes" id="UP000002481">
    <property type="component" value="Chromosome"/>
</dbReference>
<dbReference type="GO" id="GO:0005524">
    <property type="term" value="F:ATP binding"/>
    <property type="evidence" value="ECO:0007669"/>
    <property type="project" value="UniProtKB-KW"/>
</dbReference>
<dbReference type="GO" id="GO:0016887">
    <property type="term" value="F:ATP hydrolysis activity"/>
    <property type="evidence" value="ECO:0007669"/>
    <property type="project" value="RHEA"/>
</dbReference>
<dbReference type="GO" id="GO:0003677">
    <property type="term" value="F:DNA binding"/>
    <property type="evidence" value="ECO:0007669"/>
    <property type="project" value="UniProtKB-KW"/>
</dbReference>
<dbReference type="GO" id="GO:0003678">
    <property type="term" value="F:DNA helicase activity"/>
    <property type="evidence" value="ECO:0007669"/>
    <property type="project" value="InterPro"/>
</dbReference>
<dbReference type="GO" id="GO:0006310">
    <property type="term" value="P:DNA recombination"/>
    <property type="evidence" value="ECO:0007669"/>
    <property type="project" value="UniProtKB-KW"/>
</dbReference>
<dbReference type="GO" id="GO:0006281">
    <property type="term" value="P:DNA repair"/>
    <property type="evidence" value="ECO:0007669"/>
    <property type="project" value="UniProtKB-KW"/>
</dbReference>
<dbReference type="CDD" id="cd17992">
    <property type="entry name" value="DEXHc_RecG"/>
    <property type="match status" value="1"/>
</dbReference>
<dbReference type="CDD" id="cd04488">
    <property type="entry name" value="RecG_wedge_OBF"/>
    <property type="match status" value="1"/>
</dbReference>
<dbReference type="Gene3D" id="2.40.50.140">
    <property type="entry name" value="Nucleic acid-binding proteins"/>
    <property type="match status" value="1"/>
</dbReference>
<dbReference type="Gene3D" id="3.40.50.300">
    <property type="entry name" value="P-loop containing nucleotide triphosphate hydrolases"/>
    <property type="match status" value="2"/>
</dbReference>
<dbReference type="InterPro" id="IPR004609">
    <property type="entry name" value="ATP-dep_DNA_helicase_RecG"/>
</dbReference>
<dbReference type="InterPro" id="IPR011545">
    <property type="entry name" value="DEAD/DEAH_box_helicase_dom"/>
</dbReference>
<dbReference type="InterPro" id="IPR014001">
    <property type="entry name" value="Helicase_ATP-bd"/>
</dbReference>
<dbReference type="InterPro" id="IPR001650">
    <property type="entry name" value="Helicase_C-like"/>
</dbReference>
<dbReference type="InterPro" id="IPR012340">
    <property type="entry name" value="NA-bd_OB-fold"/>
</dbReference>
<dbReference type="InterPro" id="IPR027417">
    <property type="entry name" value="P-loop_NTPase"/>
</dbReference>
<dbReference type="InterPro" id="IPR047112">
    <property type="entry name" value="RecG/Mfd"/>
</dbReference>
<dbReference type="InterPro" id="IPR045562">
    <property type="entry name" value="RecG_dom3_C"/>
</dbReference>
<dbReference type="InterPro" id="IPR033454">
    <property type="entry name" value="RecG_wedge"/>
</dbReference>
<dbReference type="NCBIfam" id="NF008165">
    <property type="entry name" value="PRK10917.1-3"/>
    <property type="match status" value="1"/>
</dbReference>
<dbReference type="NCBIfam" id="NF008168">
    <property type="entry name" value="PRK10917.2-2"/>
    <property type="match status" value="1"/>
</dbReference>
<dbReference type="NCBIfam" id="TIGR00643">
    <property type="entry name" value="recG"/>
    <property type="match status" value="1"/>
</dbReference>
<dbReference type="PANTHER" id="PTHR47964">
    <property type="entry name" value="ATP-DEPENDENT DNA HELICASE HOMOLOG RECG, CHLOROPLASTIC"/>
    <property type="match status" value="1"/>
</dbReference>
<dbReference type="PANTHER" id="PTHR47964:SF1">
    <property type="entry name" value="ATP-DEPENDENT DNA HELICASE HOMOLOG RECG, CHLOROPLASTIC"/>
    <property type="match status" value="1"/>
</dbReference>
<dbReference type="Pfam" id="PF00270">
    <property type="entry name" value="DEAD"/>
    <property type="match status" value="1"/>
</dbReference>
<dbReference type="Pfam" id="PF00271">
    <property type="entry name" value="Helicase_C"/>
    <property type="match status" value="1"/>
</dbReference>
<dbReference type="Pfam" id="PF19833">
    <property type="entry name" value="RecG_dom3_C"/>
    <property type="match status" value="1"/>
</dbReference>
<dbReference type="Pfam" id="PF17191">
    <property type="entry name" value="RecG_wedge"/>
    <property type="match status" value="1"/>
</dbReference>
<dbReference type="SMART" id="SM00487">
    <property type="entry name" value="DEXDc"/>
    <property type="match status" value="1"/>
</dbReference>
<dbReference type="SMART" id="SM00490">
    <property type="entry name" value="HELICc"/>
    <property type="match status" value="1"/>
</dbReference>
<dbReference type="SUPFAM" id="SSF50249">
    <property type="entry name" value="Nucleic acid-binding proteins"/>
    <property type="match status" value="1"/>
</dbReference>
<dbReference type="SUPFAM" id="SSF52540">
    <property type="entry name" value="P-loop containing nucleoside triphosphate hydrolases"/>
    <property type="match status" value="2"/>
</dbReference>
<dbReference type="PROSITE" id="PS51192">
    <property type="entry name" value="HELICASE_ATP_BIND_1"/>
    <property type="match status" value="1"/>
</dbReference>
<dbReference type="PROSITE" id="PS51194">
    <property type="entry name" value="HELICASE_CTER"/>
    <property type="match status" value="1"/>
</dbReference>
<comment type="function">
    <text evidence="1">Plays a critical role in recombination and DNA repair. Helps process Holliday junction intermediates to mature products by catalyzing branch migration. Has replication fork regression activity, unwinds stalled or blocked replication forks to make a HJ that can be resolved. Has a DNA unwinding activity characteristic of a DNA helicase with 3'-5' polarity (By similarity).</text>
</comment>
<comment type="catalytic activity">
    <reaction evidence="1">
        <text>Couples ATP hydrolysis with the unwinding of duplex DNA by translocating in the 3'-5' direction.</text>
        <dbReference type="EC" id="5.6.2.4"/>
    </reaction>
</comment>
<comment type="catalytic activity">
    <reaction evidence="1">
        <text>ATP + H2O = ADP + phosphate + H(+)</text>
        <dbReference type="Rhea" id="RHEA:13065"/>
        <dbReference type="ChEBI" id="CHEBI:15377"/>
        <dbReference type="ChEBI" id="CHEBI:15378"/>
        <dbReference type="ChEBI" id="CHEBI:30616"/>
        <dbReference type="ChEBI" id="CHEBI:43474"/>
        <dbReference type="ChEBI" id="CHEBI:456216"/>
        <dbReference type="EC" id="5.6.2.4"/>
    </reaction>
</comment>
<comment type="subunit">
    <text evidence="2">Monomer (By similarity).</text>
</comment>
<comment type="domain">
    <text evidence="2">The wedge domain within the N-terminus inserts into the replication fork junction, where the lagging and leading strand split (By similarity).</text>
</comment>
<comment type="similarity">
    <text evidence="5">Belongs to the helicase family. RecG subfamily.</text>
</comment>
<reference key="1">
    <citation type="journal article" date="2001" name="Lancet">
        <title>Whole genome sequencing of meticillin-resistant Staphylococcus aureus.</title>
        <authorList>
            <person name="Kuroda M."/>
            <person name="Ohta T."/>
            <person name="Uchiyama I."/>
            <person name="Baba T."/>
            <person name="Yuzawa H."/>
            <person name="Kobayashi I."/>
            <person name="Cui L."/>
            <person name="Oguchi A."/>
            <person name="Aoki K."/>
            <person name="Nagai Y."/>
            <person name="Lian J.-Q."/>
            <person name="Ito T."/>
            <person name="Kanamori M."/>
            <person name="Matsumaru H."/>
            <person name="Maruyama A."/>
            <person name="Murakami H."/>
            <person name="Hosoyama A."/>
            <person name="Mizutani-Ui Y."/>
            <person name="Takahashi N.K."/>
            <person name="Sawano T."/>
            <person name="Inoue R."/>
            <person name="Kaito C."/>
            <person name="Sekimizu K."/>
            <person name="Hirakawa H."/>
            <person name="Kuhara S."/>
            <person name="Goto S."/>
            <person name="Yabuzaki J."/>
            <person name="Kanehisa M."/>
            <person name="Yamashita A."/>
            <person name="Oshima K."/>
            <person name="Furuya K."/>
            <person name="Yoshino C."/>
            <person name="Shiba T."/>
            <person name="Hattori M."/>
            <person name="Ogasawara N."/>
            <person name="Hayashi H."/>
            <person name="Hiramatsu K."/>
        </authorList>
    </citation>
    <scope>NUCLEOTIDE SEQUENCE [LARGE SCALE GENOMIC DNA]</scope>
    <source>
        <strain>Mu50 / ATCC 700699</strain>
    </source>
</reference>
<accession>P64324</accession>
<accession>Q99UP1</accession>
<proteinExistence type="inferred from homology"/>